<evidence type="ECO:0000255" key="1">
    <source>
        <dbReference type="HAMAP-Rule" id="MF_01315"/>
    </source>
</evidence>
<evidence type="ECO:0000256" key="2">
    <source>
        <dbReference type="SAM" id="MobiDB-lite"/>
    </source>
</evidence>
<evidence type="ECO:0000305" key="3"/>
<name>RS13_BARHE</name>
<dbReference type="EMBL" id="BX897699">
    <property type="protein sequence ID" value="CAF27820.1"/>
    <property type="molecule type" value="Genomic_DNA"/>
</dbReference>
<dbReference type="RefSeq" id="WP_004859152.1">
    <property type="nucleotide sequence ID" value="NZ_LRIJ02000001.1"/>
</dbReference>
<dbReference type="SMR" id="Q6G2Y7"/>
<dbReference type="PaxDb" id="283166-BH10290"/>
<dbReference type="EnsemblBacteria" id="CAF27820">
    <property type="protein sequence ID" value="CAF27820"/>
    <property type="gene ID" value="BH10290"/>
</dbReference>
<dbReference type="GeneID" id="92985285"/>
<dbReference type="KEGG" id="bhe:BH10290"/>
<dbReference type="eggNOG" id="COG0099">
    <property type="taxonomic scope" value="Bacteria"/>
</dbReference>
<dbReference type="OrthoDB" id="9803610at2"/>
<dbReference type="Proteomes" id="UP000000421">
    <property type="component" value="Chromosome"/>
</dbReference>
<dbReference type="GO" id="GO:0005829">
    <property type="term" value="C:cytosol"/>
    <property type="evidence" value="ECO:0007669"/>
    <property type="project" value="TreeGrafter"/>
</dbReference>
<dbReference type="GO" id="GO:0015935">
    <property type="term" value="C:small ribosomal subunit"/>
    <property type="evidence" value="ECO:0007669"/>
    <property type="project" value="TreeGrafter"/>
</dbReference>
<dbReference type="GO" id="GO:0019843">
    <property type="term" value="F:rRNA binding"/>
    <property type="evidence" value="ECO:0007669"/>
    <property type="project" value="UniProtKB-UniRule"/>
</dbReference>
<dbReference type="GO" id="GO:0003735">
    <property type="term" value="F:structural constituent of ribosome"/>
    <property type="evidence" value="ECO:0007669"/>
    <property type="project" value="InterPro"/>
</dbReference>
<dbReference type="GO" id="GO:0000049">
    <property type="term" value="F:tRNA binding"/>
    <property type="evidence" value="ECO:0007669"/>
    <property type="project" value="UniProtKB-UniRule"/>
</dbReference>
<dbReference type="GO" id="GO:0006412">
    <property type="term" value="P:translation"/>
    <property type="evidence" value="ECO:0007669"/>
    <property type="project" value="UniProtKB-UniRule"/>
</dbReference>
<dbReference type="FunFam" id="1.10.8.50:FF:000001">
    <property type="entry name" value="30S ribosomal protein S13"/>
    <property type="match status" value="1"/>
</dbReference>
<dbReference type="FunFam" id="4.10.910.10:FF:000001">
    <property type="entry name" value="30S ribosomal protein S13"/>
    <property type="match status" value="1"/>
</dbReference>
<dbReference type="Gene3D" id="1.10.8.50">
    <property type="match status" value="1"/>
</dbReference>
<dbReference type="Gene3D" id="4.10.910.10">
    <property type="entry name" value="30s ribosomal protein s13, domain 2"/>
    <property type="match status" value="1"/>
</dbReference>
<dbReference type="HAMAP" id="MF_01315">
    <property type="entry name" value="Ribosomal_uS13"/>
    <property type="match status" value="1"/>
</dbReference>
<dbReference type="InterPro" id="IPR027437">
    <property type="entry name" value="Rbsml_uS13_C"/>
</dbReference>
<dbReference type="InterPro" id="IPR001892">
    <property type="entry name" value="Ribosomal_uS13"/>
</dbReference>
<dbReference type="InterPro" id="IPR010979">
    <property type="entry name" value="Ribosomal_uS13-like_H2TH"/>
</dbReference>
<dbReference type="InterPro" id="IPR019980">
    <property type="entry name" value="Ribosomal_uS13_bac-type"/>
</dbReference>
<dbReference type="InterPro" id="IPR018269">
    <property type="entry name" value="Ribosomal_uS13_CS"/>
</dbReference>
<dbReference type="NCBIfam" id="TIGR03631">
    <property type="entry name" value="uS13_bact"/>
    <property type="match status" value="1"/>
</dbReference>
<dbReference type="PANTHER" id="PTHR10871">
    <property type="entry name" value="30S RIBOSOMAL PROTEIN S13/40S RIBOSOMAL PROTEIN S18"/>
    <property type="match status" value="1"/>
</dbReference>
<dbReference type="PANTHER" id="PTHR10871:SF1">
    <property type="entry name" value="SMALL RIBOSOMAL SUBUNIT PROTEIN US13M"/>
    <property type="match status" value="1"/>
</dbReference>
<dbReference type="Pfam" id="PF00416">
    <property type="entry name" value="Ribosomal_S13"/>
    <property type="match status" value="1"/>
</dbReference>
<dbReference type="PIRSF" id="PIRSF002134">
    <property type="entry name" value="Ribosomal_S13"/>
    <property type="match status" value="1"/>
</dbReference>
<dbReference type="SUPFAM" id="SSF46946">
    <property type="entry name" value="S13-like H2TH domain"/>
    <property type="match status" value="1"/>
</dbReference>
<dbReference type="PROSITE" id="PS00646">
    <property type="entry name" value="RIBOSOMAL_S13_1"/>
    <property type="match status" value="1"/>
</dbReference>
<dbReference type="PROSITE" id="PS50159">
    <property type="entry name" value="RIBOSOMAL_S13_2"/>
    <property type="match status" value="1"/>
</dbReference>
<protein>
    <recommendedName>
        <fullName evidence="1">Small ribosomal subunit protein uS13</fullName>
    </recommendedName>
    <alternativeName>
        <fullName evidence="3">30S ribosomal protein S13</fullName>
    </alternativeName>
</protein>
<gene>
    <name evidence="1" type="primary">rpsM</name>
    <name type="ordered locus">BH10290</name>
</gene>
<organism>
    <name type="scientific">Bartonella henselae (strain ATCC 49882 / DSM 28221 / CCUG 30454 / Houston 1)</name>
    <name type="common">Rochalimaea henselae</name>
    <dbReference type="NCBI Taxonomy" id="283166"/>
    <lineage>
        <taxon>Bacteria</taxon>
        <taxon>Pseudomonadati</taxon>
        <taxon>Pseudomonadota</taxon>
        <taxon>Alphaproteobacteria</taxon>
        <taxon>Hyphomicrobiales</taxon>
        <taxon>Bartonellaceae</taxon>
        <taxon>Bartonella</taxon>
    </lineage>
</organism>
<sequence length="122" mass="13728">MARIAGVNIPTNKRVIIALQYIHGIGPKFAQEITKKVGIPIGRRVHELSDAEVLQIREAIDQGYQVEGDLRREVAMNVKRLMDLGCYRGLRHRRSLPVRGQRTHTNARTRKGPAKAIAGKKK</sequence>
<proteinExistence type="inferred from homology"/>
<reference key="1">
    <citation type="journal article" date="2004" name="Proc. Natl. Acad. Sci. U.S.A.">
        <title>The louse-borne human pathogen Bartonella quintana is a genomic derivative of the zoonotic agent Bartonella henselae.</title>
        <authorList>
            <person name="Alsmark U.C.M."/>
            <person name="Frank A.C."/>
            <person name="Karlberg E.O."/>
            <person name="Legault B.-A."/>
            <person name="Ardell D.H."/>
            <person name="Canbaeck B."/>
            <person name="Eriksson A.-S."/>
            <person name="Naeslund A.K."/>
            <person name="Handley S.A."/>
            <person name="Huvet M."/>
            <person name="La Scola B."/>
            <person name="Holmberg M."/>
            <person name="Andersson S.G.E."/>
        </authorList>
    </citation>
    <scope>NUCLEOTIDE SEQUENCE [LARGE SCALE GENOMIC DNA]</scope>
    <source>
        <strain>ATCC 49882 / DSM 28221 / CCUG 30454 / Houston 1</strain>
    </source>
</reference>
<feature type="chain" id="PRO_0000230473" description="Small ribosomal subunit protein uS13">
    <location>
        <begin position="1"/>
        <end position="122"/>
    </location>
</feature>
<feature type="region of interest" description="Disordered" evidence="2">
    <location>
        <begin position="97"/>
        <end position="122"/>
    </location>
</feature>
<keyword id="KW-0687">Ribonucleoprotein</keyword>
<keyword id="KW-0689">Ribosomal protein</keyword>
<keyword id="KW-0694">RNA-binding</keyword>
<keyword id="KW-0699">rRNA-binding</keyword>
<keyword id="KW-0820">tRNA-binding</keyword>
<comment type="function">
    <text evidence="1">Located at the top of the head of the 30S subunit, it contacts several helices of the 16S rRNA. In the 70S ribosome it contacts the 23S rRNA (bridge B1a) and protein L5 of the 50S subunit (bridge B1b), connecting the 2 subunits; these bridges are implicated in subunit movement. Contacts the tRNAs in the A and P-sites.</text>
</comment>
<comment type="subunit">
    <text evidence="1">Part of the 30S ribosomal subunit. Forms a loose heterodimer with protein S19. Forms two bridges to the 50S subunit in the 70S ribosome.</text>
</comment>
<comment type="similarity">
    <text evidence="1">Belongs to the universal ribosomal protein uS13 family.</text>
</comment>
<accession>Q6G2Y7</accession>